<organism>
    <name type="scientific">Pandinus imperator</name>
    <name type="common">Emperor scorpion</name>
    <dbReference type="NCBI Taxonomy" id="55084"/>
    <lineage>
        <taxon>Eukaryota</taxon>
        <taxon>Metazoa</taxon>
        <taxon>Ecdysozoa</taxon>
        <taxon>Arthropoda</taxon>
        <taxon>Chelicerata</taxon>
        <taxon>Arachnida</taxon>
        <taxon>Scorpiones</taxon>
        <taxon>Iurida</taxon>
        <taxon>Scorpionoidea</taxon>
        <taxon>Scorpionidae</taxon>
        <taxon>Pandininae</taxon>
        <taxon>Pandinus</taxon>
    </lineage>
</organism>
<evidence type="ECO:0000269" key="1">
    <source>
    </source>
</evidence>
<evidence type="ECO:0000269" key="2">
    <source>
    </source>
</evidence>
<evidence type="ECO:0000269" key="3">
    <source>
    </source>
</evidence>
<evidence type="ECO:0000303" key="4">
    <source>
    </source>
</evidence>
<evidence type="ECO:0000305" key="5"/>
<evidence type="ECO:0000305" key="6">
    <source>
    </source>
</evidence>
<evidence type="ECO:0000305" key="7">
    <source>
    </source>
</evidence>
<evidence type="ECO:0007744" key="8">
    <source>
        <dbReference type="PDB" id="1N8M"/>
    </source>
</evidence>
<evidence type="ECO:0007829" key="9">
    <source>
        <dbReference type="PDB" id="1N8M"/>
    </source>
</evidence>
<sequence length="38" mass="4188">IEAIRCGGSRDCYRPCQKRTGCPNAKCINKTCKCYGCS</sequence>
<accession>P58498</accession>
<comment type="function">
    <text evidence="1">Potently, completely and reversibly blocks voltage-gated potassium channel Kv1.2/KCNA2 and Shaker B (Sh). Also blocks small conductance (SK) calcium-activated potassium channel (KCNN).</text>
</comment>
<comment type="subcellular location">
    <subcellularLocation>
        <location evidence="3">Secreted</location>
    </subcellularLocation>
</comment>
<comment type="tissue specificity">
    <text evidence="7">Expressed by the venom gland.</text>
</comment>
<comment type="domain">
    <text evidence="2">Has the structural arrangement of an alpha-helix connected to a beta-sheet by disulfide bonds (CSalpha/beta).</text>
</comment>
<comment type="toxic dose">
    <text evidence="1">LD(50) is 10 ug/kg by intracerebroventricular injection into mice.</text>
</comment>
<comment type="miscellaneous">
    <text evidence="6">Negative results: has no effect on voltage-gated potassium channel Kv1.1/KCNA1 and Kv1.3/KCNA3.</text>
</comment>
<comment type="similarity">
    <text evidence="5">Belongs to the short scorpion toxin superfamily. Potassium channel inhibitor family. Alpha-KTx 06 subfamily.</text>
</comment>
<reference key="1">
    <citation type="journal article" date="1998" name="Toxicon">
        <title>Two similar peptides from the venom of the scorpion Pandinus imperator, one highly effective blocker and the other inactive on K+ channels.</title>
        <authorList>
            <person name="Olamendi-Portugal T."/>
            <person name="Gomez-Lagunas F."/>
            <person name="Gurrola G.B."/>
            <person name="Possani L.D."/>
        </authorList>
    </citation>
    <scope>PROTEIN SEQUENCE</scope>
    <scope>SUBCELLULAR LOCATION</scope>
    <source>
        <tissue>Venom</tissue>
    </source>
</reference>
<reference key="2">
    <citation type="journal article" date="2003" name="Eur. J. Biochem.">
        <title>Synthesis and characterization of Pi4, a scorpion toxin from Pandinus imperator that acts on K+ channels.</title>
        <authorList>
            <person name="M'Barek S."/>
            <person name="Mosbah A."/>
            <person name="Sandoz G."/>
            <person name="Fajloun Z."/>
            <person name="Olamendi-Portugal T."/>
            <person name="Rochat H."/>
            <person name="Sampieri F."/>
            <person name="Guijarro J.I."/>
            <person name="Mansuelle P."/>
            <person name="Delepierre M."/>
            <person name="De Waard M."/>
            <person name="Sabatier J.-M."/>
        </authorList>
    </citation>
    <scope>FUNCTION</scope>
    <scope>TOXIC DOSE</scope>
    <scope>DISULFIDE BONDS</scope>
    <scope>SYNTHESIS</scope>
</reference>
<reference key="3">
    <citation type="journal article" date="2003" name="Protein Sci.">
        <title>Solution structure of Pi4, a short four-disulfide-bridged scorpion toxin specific of potassium channels.</title>
        <authorList>
            <person name="Guijarro J.I."/>
            <person name="M'Barek S."/>
            <person name="Gomez-Lagunas F."/>
            <person name="Garnier D."/>
            <person name="Rochat H."/>
            <person name="Sabatier J.-M."/>
            <person name="Possani L.D."/>
            <person name="Delepierre M."/>
        </authorList>
    </citation>
    <scope>STRUCTURE BY NMR</scope>
    <scope>DOMAIN</scope>
    <scope>DISULFIDE BONDS</scope>
    <scope>SYNTHESIS</scope>
</reference>
<reference key="4">
    <citation type="journal article" date="2003" name="Protein Sci.">
        <authorList>
            <person name="Guijarro J.I."/>
            <person name="M'Barek S."/>
            <person name="Gomez-Lagunas F."/>
            <person name="Garnier D."/>
            <person name="Rochat H."/>
            <person name="Sabatier J.-M."/>
            <person name="Possani L."/>
            <person name="Delepierre M."/>
        </authorList>
    </citation>
    <scope>ERRATUM OF PUBMED:12930984</scope>
</reference>
<feature type="peptide" id="PRO_0000044913" description="Potassium channel toxin alpha-KTx 6.4" evidence="3">
    <location>
        <begin position="1"/>
        <end position="38"/>
    </location>
</feature>
<feature type="site" description="Important for the interaction with Kv1.2/KCNA2 channel" evidence="4">
    <location>
        <position position="10"/>
    </location>
</feature>
<feature type="site" description="Important for the interaction with Kv1.2/KCNA2 channel" evidence="4">
    <location>
        <position position="19"/>
    </location>
</feature>
<feature type="site" description="Basic residue of the functional dyad, important for the interaction with Kv1.2/KCNA2 channel" evidence="4">
    <location>
        <position position="26"/>
    </location>
</feature>
<feature type="site" description="Important for the interaction with Kv1.2/KCNA2 channel" evidence="4">
    <location>
        <position position="28"/>
    </location>
</feature>
<feature type="site" description="Important for the interaction with Kv1.2/KCNA2 channel" evidence="4">
    <location>
        <position position="30"/>
    </location>
</feature>
<feature type="site" description="Important for the interaction with Kv1.2/KCNA2 channel" evidence="4">
    <location>
        <position position="33"/>
    </location>
</feature>
<feature type="site" description="Aromatic residue of the functional dyad, important for the interaction with Kv1.2/KCNA2 channel" evidence="4">
    <location>
        <position position="35"/>
    </location>
</feature>
<feature type="disulfide bond" evidence="1 2 8">
    <location>
        <begin position="6"/>
        <end position="27"/>
    </location>
</feature>
<feature type="disulfide bond" evidence="1 2 8">
    <location>
        <begin position="12"/>
        <end position="32"/>
    </location>
</feature>
<feature type="disulfide bond" evidence="1 2 8">
    <location>
        <begin position="16"/>
        <end position="34"/>
    </location>
</feature>
<feature type="disulfide bond" evidence="1 2 8">
    <location>
        <begin position="22"/>
        <end position="37"/>
    </location>
</feature>
<feature type="helix" evidence="9">
    <location>
        <begin position="10"/>
        <end position="20"/>
    </location>
</feature>
<feature type="strand" evidence="9">
    <location>
        <begin position="25"/>
        <end position="28"/>
    </location>
</feature>
<feature type="strand" evidence="9">
    <location>
        <begin position="31"/>
        <end position="34"/>
    </location>
</feature>
<protein>
    <recommendedName>
        <fullName>Potassium channel toxin alpha-KTx 6.4</fullName>
    </recommendedName>
    <alternativeName>
        <fullName>Potassium channel-blocking toxin 4</fullName>
        <shortName>Pi-4</shortName>
        <shortName>Pi4</shortName>
    </alternativeName>
</protein>
<dbReference type="PDB" id="1N8M">
    <property type="method" value="NMR"/>
    <property type="chains" value="A=1-38"/>
</dbReference>
<dbReference type="PDBsum" id="1N8M"/>
<dbReference type="SMR" id="P58498"/>
<dbReference type="EvolutionaryTrace" id="P58498"/>
<dbReference type="GO" id="GO:0005576">
    <property type="term" value="C:extracellular region"/>
    <property type="evidence" value="ECO:0007669"/>
    <property type="project" value="UniProtKB-SubCell"/>
</dbReference>
<dbReference type="GO" id="GO:0008200">
    <property type="term" value="F:ion channel inhibitor activity"/>
    <property type="evidence" value="ECO:0007669"/>
    <property type="project" value="InterPro"/>
</dbReference>
<dbReference type="GO" id="GO:0015459">
    <property type="term" value="F:potassium channel regulator activity"/>
    <property type="evidence" value="ECO:0007669"/>
    <property type="project" value="UniProtKB-KW"/>
</dbReference>
<dbReference type="GO" id="GO:0090729">
    <property type="term" value="F:toxin activity"/>
    <property type="evidence" value="ECO:0007669"/>
    <property type="project" value="UniProtKB-KW"/>
</dbReference>
<dbReference type="Gene3D" id="3.30.30.10">
    <property type="entry name" value="Knottin, scorpion toxin-like"/>
    <property type="match status" value="1"/>
</dbReference>
<dbReference type="InterPro" id="IPR036574">
    <property type="entry name" value="Scorpion_toxin-like_sf"/>
</dbReference>
<dbReference type="InterPro" id="IPR001947">
    <property type="entry name" value="Scorpion_toxinS_K_inh"/>
</dbReference>
<dbReference type="Pfam" id="PF00451">
    <property type="entry name" value="Toxin_2"/>
    <property type="match status" value="1"/>
</dbReference>
<dbReference type="SUPFAM" id="SSF57095">
    <property type="entry name" value="Scorpion toxin-like"/>
    <property type="match status" value="1"/>
</dbReference>
<dbReference type="PROSITE" id="PS01138">
    <property type="entry name" value="SCORP_SHORT_TOXIN"/>
    <property type="match status" value="1"/>
</dbReference>
<keyword id="KW-0002">3D-structure</keyword>
<keyword id="KW-1221">Calcium-activated potassium channel impairing toxin</keyword>
<keyword id="KW-0903">Direct protein sequencing</keyword>
<keyword id="KW-1015">Disulfide bond</keyword>
<keyword id="KW-0872">Ion channel impairing toxin</keyword>
<keyword id="KW-0632">Potassium channel impairing toxin</keyword>
<keyword id="KW-0964">Secreted</keyword>
<keyword id="KW-0800">Toxin</keyword>
<keyword id="KW-1220">Voltage-gated potassium channel impairing toxin</keyword>
<name>KAX64_PANIM</name>
<proteinExistence type="evidence at protein level"/>